<reference key="1">
    <citation type="submission" date="2007-08" db="EMBL/GenBank/DDBJ databases">
        <authorList>
            <consortium name="The Citrobacter koseri Genome Sequencing Project"/>
            <person name="McClelland M."/>
            <person name="Sanderson E.K."/>
            <person name="Porwollik S."/>
            <person name="Spieth J."/>
            <person name="Clifton W.S."/>
            <person name="Latreille P."/>
            <person name="Courtney L."/>
            <person name="Wang C."/>
            <person name="Pepin K."/>
            <person name="Bhonagiri V."/>
            <person name="Nash W."/>
            <person name="Johnson M."/>
            <person name="Thiruvilangam P."/>
            <person name="Wilson R."/>
        </authorList>
    </citation>
    <scope>NUCLEOTIDE SEQUENCE [LARGE SCALE GENOMIC DNA]</scope>
    <source>
        <strain>ATCC BAA-895 / CDC 4225-83 / SGSC4696</strain>
    </source>
</reference>
<dbReference type="EC" id="1.18.1.-" evidence="1"/>
<dbReference type="EMBL" id="CP000822">
    <property type="protein sequence ID" value="ABV15131.1"/>
    <property type="molecule type" value="Genomic_DNA"/>
</dbReference>
<dbReference type="RefSeq" id="WP_012134821.1">
    <property type="nucleotide sequence ID" value="NC_009792.1"/>
</dbReference>
<dbReference type="SMR" id="A8ANR8"/>
<dbReference type="STRING" id="290338.CKO_04065"/>
<dbReference type="GeneID" id="45137707"/>
<dbReference type="KEGG" id="cko:CKO_04065"/>
<dbReference type="HOGENOM" id="CLU_003291_4_4_6"/>
<dbReference type="OrthoDB" id="9808980at2"/>
<dbReference type="UniPathway" id="UPA00638"/>
<dbReference type="Proteomes" id="UP000008148">
    <property type="component" value="Chromosome"/>
</dbReference>
<dbReference type="GO" id="GO:0005737">
    <property type="term" value="C:cytoplasm"/>
    <property type="evidence" value="ECO:0007669"/>
    <property type="project" value="UniProtKB-SubCell"/>
</dbReference>
<dbReference type="GO" id="GO:0016731">
    <property type="term" value="F:oxidoreductase activity, acting on iron-sulfur proteins as donors, NAD or NADP as acceptor"/>
    <property type="evidence" value="ECO:0007669"/>
    <property type="project" value="UniProtKB-UniRule"/>
</dbReference>
<dbReference type="Gene3D" id="3.30.390.120">
    <property type="match status" value="1"/>
</dbReference>
<dbReference type="Gene3D" id="3.50.50.60">
    <property type="entry name" value="FAD/NAD(P)-binding domain"/>
    <property type="match status" value="2"/>
</dbReference>
<dbReference type="HAMAP" id="MF_01313">
    <property type="entry name" value="NorW"/>
    <property type="match status" value="1"/>
</dbReference>
<dbReference type="InterPro" id="IPR050260">
    <property type="entry name" value="FAD-bd_OxRdtase"/>
</dbReference>
<dbReference type="InterPro" id="IPR036188">
    <property type="entry name" value="FAD/NAD-bd_sf"/>
</dbReference>
<dbReference type="InterPro" id="IPR023753">
    <property type="entry name" value="FAD/NAD-binding_dom"/>
</dbReference>
<dbReference type="InterPro" id="IPR023961">
    <property type="entry name" value="NO_rdtase_NorW"/>
</dbReference>
<dbReference type="InterPro" id="IPR041364">
    <property type="entry name" value="Rbx-bd"/>
</dbReference>
<dbReference type="NCBIfam" id="NF003437">
    <property type="entry name" value="PRK04965.1"/>
    <property type="match status" value="1"/>
</dbReference>
<dbReference type="PANTHER" id="PTHR43429:SF3">
    <property type="entry name" value="NITRITE REDUCTASE [NAD(P)H]"/>
    <property type="match status" value="1"/>
</dbReference>
<dbReference type="PANTHER" id="PTHR43429">
    <property type="entry name" value="PYRIDINE NUCLEOTIDE-DISULFIDE OXIDOREDUCTASE DOMAIN-CONTAINING"/>
    <property type="match status" value="1"/>
</dbReference>
<dbReference type="Pfam" id="PF07992">
    <property type="entry name" value="Pyr_redox_2"/>
    <property type="match status" value="1"/>
</dbReference>
<dbReference type="Pfam" id="PF18113">
    <property type="entry name" value="Rbx_binding"/>
    <property type="match status" value="1"/>
</dbReference>
<dbReference type="PRINTS" id="PR00368">
    <property type="entry name" value="FADPNR"/>
</dbReference>
<dbReference type="PRINTS" id="PR00411">
    <property type="entry name" value="PNDRDTASEI"/>
</dbReference>
<dbReference type="SUPFAM" id="SSF51905">
    <property type="entry name" value="FAD/NAD(P)-binding domain"/>
    <property type="match status" value="1"/>
</dbReference>
<sequence length="377" mass="41027">MSRGIVIIGSGFAARQLVKNIRKQDATVALTLIAADSMDEYNKPDLSHVISQAQRADDLTRQSAGEFAEQFNLRLFPHTWITDIDADAHVVKSQDKQWQFDKLVLATGASAFVPPVAGRELMLTLNSQQEYRACETQLRDAQRVLIVGGGLIGSELAMDFCRAGKAVTLIDNAASILASLMPPEVSSRLQHRLTDMGVHLLLKSQLQGLEKTATGIRATLDRDRQVEVDAVIAATGLRPETALARRAGLTINRGVCVDSYLQTSHPDIYALGDCAEINGQVLPFLQPIQLSAMYLAKNLLGGNAPLKLPAMLVKIKTPELPLHLAGETQRCDLNWHIAAESEGMVARGINTEGQLCAFVVSEDRMKEAFALLKTLPA</sequence>
<gene>
    <name evidence="1" type="primary">norW</name>
    <name evidence="1" type="synonym">flrR</name>
    <name type="ordered locus">CKO_04065</name>
</gene>
<accession>A8ANR8</accession>
<comment type="function">
    <text evidence="1">One of at least two accessory proteins for anaerobic nitric oxide (NO) reductase. Reduces the rubredoxin moiety of NO reductase.</text>
</comment>
<comment type="catalytic activity">
    <reaction evidence="1">
        <text>2 reduced [nitric oxide reductase rubredoxin domain] + NAD(+) + H(+) = 2 oxidized [nitric oxide reductase rubredoxin domain] + NADH</text>
        <dbReference type="Rhea" id="RHEA:42960"/>
        <dbReference type="Rhea" id="RHEA-COMP:10304"/>
        <dbReference type="Rhea" id="RHEA-COMP:10305"/>
        <dbReference type="ChEBI" id="CHEBI:15378"/>
        <dbReference type="ChEBI" id="CHEBI:29033"/>
        <dbReference type="ChEBI" id="CHEBI:29034"/>
        <dbReference type="ChEBI" id="CHEBI:57540"/>
        <dbReference type="ChEBI" id="CHEBI:57945"/>
    </reaction>
</comment>
<comment type="cofactor">
    <cofactor evidence="1">
        <name>FAD</name>
        <dbReference type="ChEBI" id="CHEBI:57692"/>
    </cofactor>
</comment>
<comment type="pathway">
    <text evidence="1">Nitrogen metabolism; nitric oxide reduction.</text>
</comment>
<comment type="subcellular location">
    <subcellularLocation>
        <location evidence="1">Cytoplasm</location>
    </subcellularLocation>
</comment>
<comment type="similarity">
    <text evidence="1">Belongs to the FAD-dependent oxidoreductase family.</text>
</comment>
<proteinExistence type="inferred from homology"/>
<evidence type="ECO:0000255" key="1">
    <source>
        <dbReference type="HAMAP-Rule" id="MF_01313"/>
    </source>
</evidence>
<organism>
    <name type="scientific">Citrobacter koseri (strain ATCC BAA-895 / CDC 4225-83 / SGSC4696)</name>
    <dbReference type="NCBI Taxonomy" id="290338"/>
    <lineage>
        <taxon>Bacteria</taxon>
        <taxon>Pseudomonadati</taxon>
        <taxon>Pseudomonadota</taxon>
        <taxon>Gammaproteobacteria</taxon>
        <taxon>Enterobacterales</taxon>
        <taxon>Enterobacteriaceae</taxon>
        <taxon>Citrobacter</taxon>
    </lineage>
</organism>
<keyword id="KW-0963">Cytoplasm</keyword>
<keyword id="KW-0274">FAD</keyword>
<keyword id="KW-0285">Flavoprotein</keyword>
<keyword id="KW-0520">NAD</keyword>
<keyword id="KW-0560">Oxidoreductase</keyword>
<keyword id="KW-1185">Reference proteome</keyword>
<name>NORW_CITK8</name>
<feature type="chain" id="PRO_0000341312" description="Nitric oxide reductase FlRd-NAD(+) reductase">
    <location>
        <begin position="1"/>
        <end position="377"/>
    </location>
</feature>
<protein>
    <recommendedName>
        <fullName evidence="1">Nitric oxide reductase FlRd-NAD(+) reductase</fullName>
        <ecNumber evidence="1">1.18.1.-</ecNumber>
    </recommendedName>
    <alternativeName>
        <fullName evidence="1">Flavorubredoxin reductase</fullName>
        <shortName evidence="1">FlRd-reductase</shortName>
        <shortName evidence="1">FlavoRb reductase</shortName>
    </alternativeName>
</protein>